<dbReference type="EMBL" id="CP001101">
    <property type="protein sequence ID" value="ACE03386.1"/>
    <property type="molecule type" value="Genomic_DNA"/>
</dbReference>
<dbReference type="SMR" id="B3ELQ7"/>
<dbReference type="STRING" id="331678.Cphamn1_0421"/>
<dbReference type="KEGG" id="cpb:Cphamn1_0421"/>
<dbReference type="eggNOG" id="COG0268">
    <property type="taxonomic scope" value="Bacteria"/>
</dbReference>
<dbReference type="HOGENOM" id="CLU_160655_3_1_10"/>
<dbReference type="OrthoDB" id="9808392at2"/>
<dbReference type="GO" id="GO:0005829">
    <property type="term" value="C:cytosol"/>
    <property type="evidence" value="ECO:0007669"/>
    <property type="project" value="TreeGrafter"/>
</dbReference>
<dbReference type="GO" id="GO:0015935">
    <property type="term" value="C:small ribosomal subunit"/>
    <property type="evidence" value="ECO:0007669"/>
    <property type="project" value="TreeGrafter"/>
</dbReference>
<dbReference type="GO" id="GO:0070181">
    <property type="term" value="F:small ribosomal subunit rRNA binding"/>
    <property type="evidence" value="ECO:0007669"/>
    <property type="project" value="TreeGrafter"/>
</dbReference>
<dbReference type="GO" id="GO:0003735">
    <property type="term" value="F:structural constituent of ribosome"/>
    <property type="evidence" value="ECO:0007669"/>
    <property type="project" value="InterPro"/>
</dbReference>
<dbReference type="GO" id="GO:0006412">
    <property type="term" value="P:translation"/>
    <property type="evidence" value="ECO:0007669"/>
    <property type="project" value="UniProtKB-UniRule"/>
</dbReference>
<dbReference type="Gene3D" id="1.20.58.110">
    <property type="entry name" value="Ribosomal protein S20"/>
    <property type="match status" value="1"/>
</dbReference>
<dbReference type="HAMAP" id="MF_00500">
    <property type="entry name" value="Ribosomal_bS20"/>
    <property type="match status" value="1"/>
</dbReference>
<dbReference type="InterPro" id="IPR002583">
    <property type="entry name" value="Ribosomal_bS20"/>
</dbReference>
<dbReference type="InterPro" id="IPR036510">
    <property type="entry name" value="Ribosomal_bS20_sf"/>
</dbReference>
<dbReference type="NCBIfam" id="TIGR00029">
    <property type="entry name" value="S20"/>
    <property type="match status" value="1"/>
</dbReference>
<dbReference type="PANTHER" id="PTHR33398">
    <property type="entry name" value="30S RIBOSOMAL PROTEIN S20"/>
    <property type="match status" value="1"/>
</dbReference>
<dbReference type="PANTHER" id="PTHR33398:SF1">
    <property type="entry name" value="SMALL RIBOSOMAL SUBUNIT PROTEIN BS20C"/>
    <property type="match status" value="1"/>
</dbReference>
<dbReference type="Pfam" id="PF01649">
    <property type="entry name" value="Ribosomal_S20p"/>
    <property type="match status" value="1"/>
</dbReference>
<dbReference type="SUPFAM" id="SSF46992">
    <property type="entry name" value="Ribosomal protein S20"/>
    <property type="match status" value="1"/>
</dbReference>
<evidence type="ECO:0000255" key="1">
    <source>
        <dbReference type="HAMAP-Rule" id="MF_00500"/>
    </source>
</evidence>
<evidence type="ECO:0000256" key="2">
    <source>
        <dbReference type="SAM" id="MobiDB-lite"/>
    </source>
</evidence>
<evidence type="ECO:0000305" key="3"/>
<proteinExistence type="inferred from homology"/>
<name>RS20_CHLPB</name>
<reference key="1">
    <citation type="submission" date="2008-06" db="EMBL/GenBank/DDBJ databases">
        <title>Complete sequence of Chlorobium phaeobacteroides BS1.</title>
        <authorList>
            <consortium name="US DOE Joint Genome Institute"/>
            <person name="Lucas S."/>
            <person name="Copeland A."/>
            <person name="Lapidus A."/>
            <person name="Glavina del Rio T."/>
            <person name="Dalin E."/>
            <person name="Tice H."/>
            <person name="Bruce D."/>
            <person name="Goodwin L."/>
            <person name="Pitluck S."/>
            <person name="Schmutz J."/>
            <person name="Larimer F."/>
            <person name="Land M."/>
            <person name="Hauser L."/>
            <person name="Kyrpides N."/>
            <person name="Ovchinnikova G."/>
            <person name="Li T."/>
            <person name="Liu Z."/>
            <person name="Zhao F."/>
            <person name="Overmann J."/>
            <person name="Bryant D.A."/>
            <person name="Richardson P."/>
        </authorList>
    </citation>
    <scope>NUCLEOTIDE SEQUENCE [LARGE SCALE GENOMIC DNA]</scope>
    <source>
        <strain>BS1</strain>
    </source>
</reference>
<keyword id="KW-0687">Ribonucleoprotein</keyword>
<keyword id="KW-0689">Ribosomal protein</keyword>
<keyword id="KW-0694">RNA-binding</keyword>
<keyword id="KW-0699">rRNA-binding</keyword>
<sequence>MPLHKSAEKRLRQSARRNERNRARKKELKVLLKTVQKLVDTNADKKEVEAAYRSAIQKLDRLGVKRYIHPNKASRKKSQLSRMLNNYMKAE</sequence>
<protein>
    <recommendedName>
        <fullName evidence="1">Small ribosomal subunit protein bS20</fullName>
    </recommendedName>
    <alternativeName>
        <fullName evidence="3">30S ribosomal protein S20</fullName>
    </alternativeName>
</protein>
<comment type="function">
    <text evidence="1">Binds directly to 16S ribosomal RNA.</text>
</comment>
<comment type="similarity">
    <text evidence="1">Belongs to the bacterial ribosomal protein bS20 family.</text>
</comment>
<organism>
    <name type="scientific">Chlorobium phaeobacteroides (strain BS1)</name>
    <dbReference type="NCBI Taxonomy" id="331678"/>
    <lineage>
        <taxon>Bacteria</taxon>
        <taxon>Pseudomonadati</taxon>
        <taxon>Chlorobiota</taxon>
        <taxon>Chlorobiia</taxon>
        <taxon>Chlorobiales</taxon>
        <taxon>Chlorobiaceae</taxon>
        <taxon>Chlorobium/Pelodictyon group</taxon>
        <taxon>Chlorobium</taxon>
    </lineage>
</organism>
<gene>
    <name evidence="1" type="primary">rpsT</name>
    <name type="ordered locus">Cphamn1_0421</name>
</gene>
<feature type="chain" id="PRO_1000126418" description="Small ribosomal subunit protein bS20">
    <location>
        <begin position="1"/>
        <end position="91"/>
    </location>
</feature>
<feature type="region of interest" description="Disordered" evidence="2">
    <location>
        <begin position="1"/>
        <end position="25"/>
    </location>
</feature>
<feature type="region of interest" description="Disordered" evidence="2">
    <location>
        <begin position="70"/>
        <end position="91"/>
    </location>
</feature>
<feature type="compositionally biased region" description="Basic and acidic residues" evidence="2">
    <location>
        <begin position="1"/>
        <end position="21"/>
    </location>
</feature>
<feature type="compositionally biased region" description="Basic residues" evidence="2">
    <location>
        <begin position="70"/>
        <end position="79"/>
    </location>
</feature>
<accession>B3ELQ7</accession>